<name>TBB_MELLI</name>
<feature type="chain" id="PRO_0000048418" description="Tubulin beta chain">
    <location>
        <begin position="1"/>
        <end position="448"/>
    </location>
</feature>
<feature type="binding site" evidence="2">
    <location>
        <position position="11"/>
    </location>
    <ligand>
        <name>GTP</name>
        <dbReference type="ChEBI" id="CHEBI:37565"/>
    </ligand>
</feature>
<feature type="binding site" evidence="1">
    <location>
        <position position="69"/>
    </location>
    <ligand>
        <name>GTP</name>
        <dbReference type="ChEBI" id="CHEBI:37565"/>
    </ligand>
</feature>
<feature type="binding site" evidence="1">
    <location>
        <position position="69"/>
    </location>
    <ligand>
        <name>Mg(2+)</name>
        <dbReference type="ChEBI" id="CHEBI:18420"/>
    </ligand>
</feature>
<feature type="binding site" evidence="2">
    <location>
        <position position="138"/>
    </location>
    <ligand>
        <name>GTP</name>
        <dbReference type="ChEBI" id="CHEBI:37565"/>
    </ligand>
</feature>
<feature type="binding site" evidence="2">
    <location>
        <position position="142"/>
    </location>
    <ligand>
        <name>GTP</name>
        <dbReference type="ChEBI" id="CHEBI:37565"/>
    </ligand>
</feature>
<feature type="binding site" evidence="2">
    <location>
        <position position="143"/>
    </location>
    <ligand>
        <name>GTP</name>
        <dbReference type="ChEBI" id="CHEBI:37565"/>
    </ligand>
</feature>
<feature type="binding site" evidence="2">
    <location>
        <position position="144"/>
    </location>
    <ligand>
        <name>GTP</name>
        <dbReference type="ChEBI" id="CHEBI:37565"/>
    </ligand>
</feature>
<feature type="binding site" evidence="2">
    <location>
        <position position="204"/>
    </location>
    <ligand>
        <name>GTP</name>
        <dbReference type="ChEBI" id="CHEBI:37565"/>
    </ligand>
</feature>
<feature type="binding site" evidence="2">
    <location>
        <position position="226"/>
    </location>
    <ligand>
        <name>GTP</name>
        <dbReference type="ChEBI" id="CHEBI:37565"/>
    </ligand>
</feature>
<gene>
    <name type="primary">TUB1</name>
</gene>
<accession>Q9HFQ3</accession>
<keyword id="KW-0963">Cytoplasm</keyword>
<keyword id="KW-0206">Cytoskeleton</keyword>
<keyword id="KW-0342">GTP-binding</keyword>
<keyword id="KW-0460">Magnesium</keyword>
<keyword id="KW-0479">Metal-binding</keyword>
<keyword id="KW-0493">Microtubule</keyword>
<keyword id="KW-0547">Nucleotide-binding</keyword>
<dbReference type="EMBL" id="AF317682">
    <property type="protein sequence ID" value="AAG33239.1"/>
    <property type="molecule type" value="Genomic_DNA"/>
</dbReference>
<dbReference type="SMR" id="Q9HFQ3"/>
<dbReference type="GO" id="GO:0005737">
    <property type="term" value="C:cytoplasm"/>
    <property type="evidence" value="ECO:0007669"/>
    <property type="project" value="UniProtKB-KW"/>
</dbReference>
<dbReference type="GO" id="GO:0005874">
    <property type="term" value="C:microtubule"/>
    <property type="evidence" value="ECO:0007669"/>
    <property type="project" value="UniProtKB-KW"/>
</dbReference>
<dbReference type="GO" id="GO:0005525">
    <property type="term" value="F:GTP binding"/>
    <property type="evidence" value="ECO:0007669"/>
    <property type="project" value="UniProtKB-KW"/>
</dbReference>
<dbReference type="GO" id="GO:0003924">
    <property type="term" value="F:GTPase activity"/>
    <property type="evidence" value="ECO:0007669"/>
    <property type="project" value="InterPro"/>
</dbReference>
<dbReference type="GO" id="GO:0046872">
    <property type="term" value="F:metal ion binding"/>
    <property type="evidence" value="ECO:0007669"/>
    <property type="project" value="UniProtKB-KW"/>
</dbReference>
<dbReference type="GO" id="GO:0005200">
    <property type="term" value="F:structural constituent of cytoskeleton"/>
    <property type="evidence" value="ECO:0007669"/>
    <property type="project" value="InterPro"/>
</dbReference>
<dbReference type="GO" id="GO:0007017">
    <property type="term" value="P:microtubule-based process"/>
    <property type="evidence" value="ECO:0007669"/>
    <property type="project" value="InterPro"/>
</dbReference>
<dbReference type="CDD" id="cd02187">
    <property type="entry name" value="beta_tubulin"/>
    <property type="match status" value="1"/>
</dbReference>
<dbReference type="FunFam" id="1.10.287.600:FF:000006">
    <property type="entry name" value="Tubulin beta chain"/>
    <property type="match status" value="1"/>
</dbReference>
<dbReference type="FunFam" id="3.30.1330.20:FF:000002">
    <property type="entry name" value="Tubulin beta chain"/>
    <property type="match status" value="1"/>
</dbReference>
<dbReference type="FunFam" id="3.40.50.1440:FF:000003">
    <property type="entry name" value="Tubulin beta chain"/>
    <property type="match status" value="1"/>
</dbReference>
<dbReference type="Gene3D" id="1.10.287.600">
    <property type="entry name" value="Helix hairpin bin"/>
    <property type="match status" value="1"/>
</dbReference>
<dbReference type="Gene3D" id="3.30.1330.20">
    <property type="entry name" value="Tubulin/FtsZ, C-terminal domain"/>
    <property type="match status" value="1"/>
</dbReference>
<dbReference type="Gene3D" id="3.40.50.1440">
    <property type="entry name" value="Tubulin/FtsZ, GTPase domain"/>
    <property type="match status" value="1"/>
</dbReference>
<dbReference type="InterPro" id="IPR013838">
    <property type="entry name" value="Beta-tubulin_BS"/>
</dbReference>
<dbReference type="InterPro" id="IPR002453">
    <property type="entry name" value="Beta_tubulin"/>
</dbReference>
<dbReference type="InterPro" id="IPR008280">
    <property type="entry name" value="Tub_FtsZ_C"/>
</dbReference>
<dbReference type="InterPro" id="IPR000217">
    <property type="entry name" value="Tubulin"/>
</dbReference>
<dbReference type="InterPro" id="IPR037103">
    <property type="entry name" value="Tubulin/FtsZ-like_C"/>
</dbReference>
<dbReference type="InterPro" id="IPR018316">
    <property type="entry name" value="Tubulin/FtsZ_2-layer-sand-dom"/>
</dbReference>
<dbReference type="InterPro" id="IPR036525">
    <property type="entry name" value="Tubulin/FtsZ_GTPase_sf"/>
</dbReference>
<dbReference type="InterPro" id="IPR023123">
    <property type="entry name" value="Tubulin_C"/>
</dbReference>
<dbReference type="InterPro" id="IPR017975">
    <property type="entry name" value="Tubulin_CS"/>
</dbReference>
<dbReference type="InterPro" id="IPR003008">
    <property type="entry name" value="Tubulin_FtsZ_GTPase"/>
</dbReference>
<dbReference type="PANTHER" id="PTHR11588">
    <property type="entry name" value="TUBULIN"/>
    <property type="match status" value="1"/>
</dbReference>
<dbReference type="Pfam" id="PF00091">
    <property type="entry name" value="Tubulin"/>
    <property type="match status" value="1"/>
</dbReference>
<dbReference type="Pfam" id="PF03953">
    <property type="entry name" value="Tubulin_C"/>
    <property type="match status" value="1"/>
</dbReference>
<dbReference type="PRINTS" id="PR01163">
    <property type="entry name" value="BETATUBULIN"/>
</dbReference>
<dbReference type="PRINTS" id="PR01161">
    <property type="entry name" value="TUBULIN"/>
</dbReference>
<dbReference type="SMART" id="SM00864">
    <property type="entry name" value="Tubulin"/>
    <property type="match status" value="1"/>
</dbReference>
<dbReference type="SMART" id="SM00865">
    <property type="entry name" value="Tubulin_C"/>
    <property type="match status" value="1"/>
</dbReference>
<dbReference type="SUPFAM" id="SSF55307">
    <property type="entry name" value="Tubulin C-terminal domain-like"/>
    <property type="match status" value="1"/>
</dbReference>
<dbReference type="SUPFAM" id="SSF52490">
    <property type="entry name" value="Tubulin nucleotide-binding domain-like"/>
    <property type="match status" value="1"/>
</dbReference>
<dbReference type="PROSITE" id="PS00227">
    <property type="entry name" value="TUBULIN"/>
    <property type="match status" value="1"/>
</dbReference>
<dbReference type="PROSITE" id="PS00228">
    <property type="entry name" value="TUBULIN_B_AUTOREG"/>
    <property type="match status" value="1"/>
</dbReference>
<comment type="function">
    <text>Tubulin is the major constituent of microtubules, a cylinder consisting of laterally associated linear protofilaments composed of alpha- and beta-tubulin heterodimers. Microtubules grow by the addition of GTP-tubulin dimers to the microtubule end, where a stabilizing cap forms. Below the cap, tubulin dimers are in GDP-bound state, owing to GTPase activity of alpha-tubulin.</text>
</comment>
<comment type="cofactor">
    <cofactor evidence="1">
        <name>Mg(2+)</name>
        <dbReference type="ChEBI" id="CHEBI:18420"/>
    </cofactor>
</comment>
<comment type="subunit">
    <text>Dimer of alpha and beta chains. A typical microtubule is a hollow water-filled tube with an outer diameter of 25 nm and an inner diameter of 15 nM. Alpha-beta heterodimers associate head-to-tail to form protofilaments running lengthwise along the microtubule wall with the beta-tubulin subunit facing the microtubule plus end conferring a structural polarity. Microtubules usually have 13 protofilaments but different protofilament numbers can be found in some organisms and specialized cells.</text>
</comment>
<comment type="subcellular location">
    <subcellularLocation>
        <location>Cytoplasm</location>
        <location>Cytoskeleton</location>
    </subcellularLocation>
</comment>
<comment type="similarity">
    <text evidence="3">Belongs to the tubulin family.</text>
</comment>
<evidence type="ECO:0000250" key="1">
    <source>
        <dbReference type="UniProtKB" id="P68363"/>
    </source>
</evidence>
<evidence type="ECO:0000250" key="2">
    <source>
        <dbReference type="UniProtKB" id="Q13509"/>
    </source>
</evidence>
<evidence type="ECO:0000305" key="3"/>
<proteinExistence type="inferred from homology"/>
<reference key="1">
    <citation type="journal article" date="2001" name="Mycol. Res.">
        <title>Characterization of the beta-tubulin gene from Melampsora lini and comparison of fungal beta-tubulin genes.</title>
        <authorList>
            <person name="Ayliffe M.A."/>
            <person name="Dodds P.N."/>
            <person name="Lawrence G.J."/>
        </authorList>
        <dbReference type="AGRICOLA" id="IND23233694"/>
    </citation>
    <scope>NUCLEOTIDE SEQUENCE [GENOMIC DNA]</scope>
</reference>
<protein>
    <recommendedName>
        <fullName>Tubulin beta chain</fullName>
    </recommendedName>
    <alternativeName>
        <fullName>Beta-tubulin</fullName>
    </alternativeName>
</protein>
<organism>
    <name type="scientific">Melampsora lini</name>
    <name type="common">Rust fungus</name>
    <dbReference type="NCBI Taxonomy" id="5261"/>
    <lineage>
        <taxon>Eukaryota</taxon>
        <taxon>Fungi</taxon>
        <taxon>Dikarya</taxon>
        <taxon>Basidiomycota</taxon>
        <taxon>Pucciniomycotina</taxon>
        <taxon>Pucciniomycetes</taxon>
        <taxon>Pucciniales</taxon>
        <taxon>Melampsoraceae</taxon>
        <taxon>Melampsora</taxon>
    </lineage>
</organism>
<sequence>MREIVHLQTGQCGNQIGAKFWEVVSDEHGIATDGQYKGTSDLQLERISVYYNEVAGNKYVPRAVLIDLEPGTMDSVRSGPFGSLFRPDNFVFGQSGAGNNWAKGHYTEGAELVDSVLDVVRKEAEGCDCLQGFQITHSLGGGTGAGMGTLLISKIREEFPDRMMATFSVVPSPKVSDTVVEPYNATLSVHQLVENSDETFCIDNEALYDICFRTLKLQTPTYGDLNHLVSIVMSGITTCLRFPGQLNSDLRKLAVNMVPFPRLHFFMVGFAPLTARGSQQYRAVTVPELTSQMFDAKNMMAASDPRHGRYLTVAAYFRGKVSMKEVEENMLSVQSKNSNYFVEWIPNNVQTAHCDIAPRGLKMSVTFIGNSTAIQDLFKRIADQFTAMFRRKAFLHWYTGEGMDEMEFTEAESNMQDLVAEYQQYQEAHVDEDEVDEEVYEDEAPPEE</sequence>